<proteinExistence type="inferred from homology"/>
<dbReference type="EMBL" id="CU928164">
    <property type="protein sequence ID" value="CAR19652.1"/>
    <property type="molecule type" value="Genomic_DNA"/>
</dbReference>
<dbReference type="RefSeq" id="WP_001375105.1">
    <property type="nucleotide sequence ID" value="NC_011750.1"/>
</dbReference>
<dbReference type="RefSeq" id="YP_002409442.1">
    <property type="nucleotide sequence ID" value="NC_011750.1"/>
</dbReference>
<dbReference type="SMR" id="B7NJQ3"/>
<dbReference type="STRING" id="585057.ECIAI39_3536"/>
<dbReference type="KEGG" id="ect:ECIAI39_3536"/>
<dbReference type="PATRIC" id="fig|585057.6.peg.3664"/>
<dbReference type="HOGENOM" id="CLU_015114_1_3_6"/>
<dbReference type="Proteomes" id="UP000000749">
    <property type="component" value="Chromosome"/>
</dbReference>
<dbReference type="GO" id="GO:0005886">
    <property type="term" value="C:plasma membrane"/>
    <property type="evidence" value="ECO:0007669"/>
    <property type="project" value="UniProtKB-SubCell"/>
</dbReference>
<dbReference type="GO" id="GO:0046872">
    <property type="term" value="F:metal ion binding"/>
    <property type="evidence" value="ECO:0007669"/>
    <property type="project" value="UniProtKB-KW"/>
</dbReference>
<dbReference type="GO" id="GO:0005385">
    <property type="term" value="F:zinc ion transmembrane transporter activity"/>
    <property type="evidence" value="ECO:0007669"/>
    <property type="project" value="UniProtKB-UniRule"/>
</dbReference>
<dbReference type="HAMAP" id="MF_00548">
    <property type="entry name" value="ZupT"/>
    <property type="match status" value="1"/>
</dbReference>
<dbReference type="InterPro" id="IPR003689">
    <property type="entry name" value="ZIP"/>
</dbReference>
<dbReference type="InterPro" id="IPR023498">
    <property type="entry name" value="Zn_transptr_ZupT"/>
</dbReference>
<dbReference type="NCBIfam" id="NF003243">
    <property type="entry name" value="PRK04201.1"/>
    <property type="match status" value="1"/>
</dbReference>
<dbReference type="PANTHER" id="PTHR11040:SF205">
    <property type="entry name" value="ZINC TRANSPORTER ZUPT"/>
    <property type="match status" value="1"/>
</dbReference>
<dbReference type="PANTHER" id="PTHR11040">
    <property type="entry name" value="ZINC/IRON TRANSPORTER"/>
    <property type="match status" value="1"/>
</dbReference>
<dbReference type="Pfam" id="PF02535">
    <property type="entry name" value="Zip"/>
    <property type="match status" value="2"/>
</dbReference>
<name>ZUPT_ECO7I</name>
<sequence length="257" mass="26513">MSVPLILTILAGAATFIGAFLGVLGQKPSNRLLAFSLGFAAGIMLLISLMEMLPAALAAEGMSPVLGYGMFIFGLLGYFGLDRMLPHAHPQDLMQKSVQPLPKSIKRTAILLTLGISLHNFPEGIATFVTASSNLELGFGIALAVALHNIPEGLAVAGPVYAATGSKRTAILWAGISGLAEILGGVLAWLILGSMISPVVMAAIMAVVAGIMVALSVDELMPLAKEIDPNNNPSYGVLCGMSVMGFSLVLLQTAGIG</sequence>
<gene>
    <name evidence="1" type="primary">zupT</name>
    <name type="ordered locus">ECIAI39_3536</name>
</gene>
<accession>B7NJQ3</accession>
<reference key="1">
    <citation type="journal article" date="2009" name="PLoS Genet.">
        <title>Organised genome dynamics in the Escherichia coli species results in highly diverse adaptive paths.</title>
        <authorList>
            <person name="Touchon M."/>
            <person name="Hoede C."/>
            <person name="Tenaillon O."/>
            <person name="Barbe V."/>
            <person name="Baeriswyl S."/>
            <person name="Bidet P."/>
            <person name="Bingen E."/>
            <person name="Bonacorsi S."/>
            <person name="Bouchier C."/>
            <person name="Bouvet O."/>
            <person name="Calteau A."/>
            <person name="Chiapello H."/>
            <person name="Clermont O."/>
            <person name="Cruveiller S."/>
            <person name="Danchin A."/>
            <person name="Diard M."/>
            <person name="Dossat C."/>
            <person name="Karoui M.E."/>
            <person name="Frapy E."/>
            <person name="Garry L."/>
            <person name="Ghigo J.M."/>
            <person name="Gilles A.M."/>
            <person name="Johnson J."/>
            <person name="Le Bouguenec C."/>
            <person name="Lescat M."/>
            <person name="Mangenot S."/>
            <person name="Martinez-Jehanne V."/>
            <person name="Matic I."/>
            <person name="Nassif X."/>
            <person name="Oztas S."/>
            <person name="Petit M.A."/>
            <person name="Pichon C."/>
            <person name="Rouy Z."/>
            <person name="Ruf C.S."/>
            <person name="Schneider D."/>
            <person name="Tourret J."/>
            <person name="Vacherie B."/>
            <person name="Vallenet D."/>
            <person name="Medigue C."/>
            <person name="Rocha E.P.C."/>
            <person name="Denamur E."/>
        </authorList>
    </citation>
    <scope>NUCLEOTIDE SEQUENCE [LARGE SCALE GENOMIC DNA]</scope>
    <source>
        <strain>IAI39 / ExPEC</strain>
    </source>
</reference>
<feature type="chain" id="PRO_1000128950" description="Zinc transporter ZupT">
    <location>
        <begin position="1"/>
        <end position="257"/>
    </location>
</feature>
<feature type="transmembrane region" description="Helical" evidence="1">
    <location>
        <begin position="5"/>
        <end position="25"/>
    </location>
</feature>
<feature type="transmembrane region" description="Helical" evidence="1">
    <location>
        <begin position="32"/>
        <end position="52"/>
    </location>
</feature>
<feature type="transmembrane region" description="Helical" evidence="1">
    <location>
        <begin position="61"/>
        <end position="81"/>
    </location>
</feature>
<feature type="transmembrane region" description="Helical" evidence="1">
    <location>
        <begin position="137"/>
        <end position="157"/>
    </location>
</feature>
<feature type="transmembrane region" description="Helical" evidence="1">
    <location>
        <begin position="171"/>
        <end position="191"/>
    </location>
</feature>
<feature type="transmembrane region" description="Helical" evidence="1">
    <location>
        <begin position="195"/>
        <end position="215"/>
    </location>
</feature>
<feature type="transmembrane region" description="Helical" evidence="1">
    <location>
        <begin position="236"/>
        <end position="256"/>
    </location>
</feature>
<feature type="binding site" description="M2 metal binding site" evidence="1">
    <location>
        <position position="120"/>
    </location>
    <ligand>
        <name>Fe(2+)</name>
        <dbReference type="ChEBI" id="CHEBI:29033"/>
    </ligand>
</feature>
<feature type="binding site" description="M2 metal binding site" evidence="1">
    <location>
        <position position="123"/>
    </location>
    <ligand>
        <name>Fe(2+)</name>
        <dbReference type="ChEBI" id="CHEBI:29033"/>
    </ligand>
</feature>
<feature type="binding site" description="M1 metal binding site" evidence="1">
    <location>
        <position position="123"/>
    </location>
    <ligand>
        <name>Zn(2+)</name>
        <dbReference type="ChEBI" id="CHEBI:29105"/>
    </ligand>
</feature>
<feature type="binding site" description="M1 metal binding site" evidence="1">
    <location>
        <position position="148"/>
    </location>
    <ligand>
        <name>Zn(2+)</name>
        <dbReference type="ChEBI" id="CHEBI:29105"/>
    </ligand>
</feature>
<feature type="binding site" description="M2 metal binding site" evidence="1">
    <location>
        <position position="149"/>
    </location>
    <ligand>
        <name>Fe(2+)</name>
        <dbReference type="ChEBI" id="CHEBI:29033"/>
    </ligand>
</feature>
<feature type="binding site" description="M2 metal binding site" evidence="1">
    <location>
        <position position="152"/>
    </location>
    <ligand>
        <name>Fe(2+)</name>
        <dbReference type="ChEBI" id="CHEBI:29033"/>
    </ligand>
</feature>
<feature type="binding site" description="M1 metal binding site" evidence="1">
    <location>
        <position position="152"/>
    </location>
    <ligand>
        <name>Zn(2+)</name>
        <dbReference type="ChEBI" id="CHEBI:29105"/>
    </ligand>
</feature>
<feature type="binding site" description="M2 metal binding site" evidence="1">
    <location>
        <position position="181"/>
    </location>
    <ligand>
        <name>Fe(2+)</name>
        <dbReference type="ChEBI" id="CHEBI:29033"/>
    </ligand>
</feature>
<protein>
    <recommendedName>
        <fullName evidence="1">Zinc transporter ZupT</fullName>
    </recommendedName>
</protein>
<organism>
    <name type="scientific">Escherichia coli O7:K1 (strain IAI39 / ExPEC)</name>
    <dbReference type="NCBI Taxonomy" id="585057"/>
    <lineage>
        <taxon>Bacteria</taxon>
        <taxon>Pseudomonadati</taxon>
        <taxon>Pseudomonadota</taxon>
        <taxon>Gammaproteobacteria</taxon>
        <taxon>Enterobacterales</taxon>
        <taxon>Enterobacteriaceae</taxon>
        <taxon>Escherichia</taxon>
    </lineage>
</organism>
<comment type="function">
    <text evidence="1">Mediates zinc uptake. May also transport other divalent cations.</text>
</comment>
<comment type="catalytic activity">
    <reaction evidence="1">
        <text>Zn(2+)(in) = Zn(2+)(out)</text>
        <dbReference type="Rhea" id="RHEA:29351"/>
        <dbReference type="ChEBI" id="CHEBI:29105"/>
    </reaction>
</comment>
<comment type="subcellular location">
    <subcellularLocation>
        <location evidence="1">Cell inner membrane</location>
        <topology evidence="1">Multi-pass membrane protein</topology>
    </subcellularLocation>
</comment>
<comment type="similarity">
    <text evidence="1">Belongs to the ZIP transporter (TC 2.A.5) family. ZupT subfamily.</text>
</comment>
<keyword id="KW-0997">Cell inner membrane</keyword>
<keyword id="KW-1003">Cell membrane</keyword>
<keyword id="KW-0406">Ion transport</keyword>
<keyword id="KW-0408">Iron</keyword>
<keyword id="KW-0472">Membrane</keyword>
<keyword id="KW-0479">Metal-binding</keyword>
<keyword id="KW-0812">Transmembrane</keyword>
<keyword id="KW-1133">Transmembrane helix</keyword>
<keyword id="KW-0813">Transport</keyword>
<keyword id="KW-0862">Zinc</keyword>
<keyword id="KW-0864">Zinc transport</keyword>
<evidence type="ECO:0000255" key="1">
    <source>
        <dbReference type="HAMAP-Rule" id="MF_00548"/>
    </source>
</evidence>